<feature type="chain" id="PRO_1000024343" description="Cation/acetate symporter ActP">
    <location>
        <begin position="1"/>
        <end position="551"/>
    </location>
</feature>
<feature type="transmembrane region" description="Helical" evidence="1">
    <location>
        <begin position="34"/>
        <end position="54"/>
    </location>
</feature>
<feature type="transmembrane region" description="Helical" evidence="1">
    <location>
        <begin position="77"/>
        <end position="97"/>
    </location>
</feature>
<feature type="transmembrane region" description="Helical" evidence="1">
    <location>
        <begin position="104"/>
        <end position="124"/>
    </location>
</feature>
<feature type="transmembrane region" description="Helical" evidence="1">
    <location>
        <begin position="150"/>
        <end position="170"/>
    </location>
</feature>
<feature type="transmembrane region" description="Helical" evidence="1">
    <location>
        <begin position="184"/>
        <end position="204"/>
    </location>
</feature>
<feature type="transmembrane region" description="Helical" evidence="1">
    <location>
        <begin position="207"/>
        <end position="227"/>
    </location>
</feature>
<feature type="transmembrane region" description="Helical" evidence="1">
    <location>
        <begin position="263"/>
        <end position="283"/>
    </location>
</feature>
<feature type="transmembrane region" description="Helical" evidence="1">
    <location>
        <begin position="304"/>
        <end position="324"/>
    </location>
</feature>
<feature type="transmembrane region" description="Helical" evidence="1">
    <location>
        <begin position="356"/>
        <end position="376"/>
    </location>
</feature>
<feature type="transmembrane region" description="Helical" evidence="1">
    <location>
        <begin position="406"/>
        <end position="426"/>
    </location>
</feature>
<feature type="transmembrane region" description="Helical" evidence="1">
    <location>
        <begin position="430"/>
        <end position="450"/>
    </location>
</feature>
<feature type="transmembrane region" description="Helical" evidence="1">
    <location>
        <begin position="469"/>
        <end position="489"/>
    </location>
</feature>
<feature type="transmembrane region" description="Helical" evidence="1">
    <location>
        <begin position="498"/>
        <end position="518"/>
    </location>
</feature>
<sequence length="551" mass="59314">MKTRHWSVLSLLALPALSQAEAITGEVHRQPLNIEAIVMFVLFVGATLYITYWASKRTRSRGDYYTAGGRITGFQNGLAIAGDFMSAASFLGISALVYTSGYDGLIYSIGFLIGWPIILFLIAERLRNLGRYTFADVASYRLKQRPIRTLSACGSLVVVALYLIAQMVGAGKLIELLFGLNYHVAVVLVGILMVMYVLFGGMLATTWVQIIKAVLLLAGASFMALMVMKSVNFNFNTLFSEAVKVHPKGLSIMSPGGLVSDPISALSLGLALMFGTAGLPHILMRFFTVSDAKEARKSVFYATGFIGYFYILTFIIGFGAILLVGPNPAFKDAAGALLGGNNMAAVHLADAVGGSFFLGFISAVAFATILAVVAGLTLAGASAVSHDLYASVIKKGKANERDELKVSKITVVVLGFVAIGLGILFEKQNIAFMVGLAFSIAASCNFPIIFISMYWEKLTTRGAMIGGWLGLLTAVILMILGPTIWVTILGHAKPIYPYEYPALFSMIVAFVGIWFFSITDNSEEGQQERLRFKAQFVRSQTGLGASQSSSH</sequence>
<name>ACTP_YERE8</name>
<comment type="function">
    <text evidence="1">Transports acetate.</text>
</comment>
<comment type="subcellular location">
    <subcellularLocation>
        <location evidence="1">Cell inner membrane</location>
        <topology evidence="1">Multi-pass membrane protein</topology>
    </subcellularLocation>
</comment>
<comment type="similarity">
    <text evidence="1">Belongs to the sodium:solute symporter (SSF) (TC 2.A.21) family.</text>
</comment>
<dbReference type="EMBL" id="AM286415">
    <property type="protein sequence ID" value="CAL10439.1"/>
    <property type="molecule type" value="Genomic_DNA"/>
</dbReference>
<dbReference type="RefSeq" id="WP_005175651.1">
    <property type="nucleotide sequence ID" value="NC_008800.1"/>
</dbReference>
<dbReference type="RefSeq" id="YP_001004688.1">
    <property type="nucleotide sequence ID" value="NC_008800.1"/>
</dbReference>
<dbReference type="SMR" id="A1JIK1"/>
<dbReference type="GeneID" id="31411460"/>
<dbReference type="KEGG" id="yen:YE0307"/>
<dbReference type="PATRIC" id="fig|393305.7.peg.400"/>
<dbReference type="eggNOG" id="COG4147">
    <property type="taxonomic scope" value="Bacteria"/>
</dbReference>
<dbReference type="HOGENOM" id="CLU_018808_8_3_6"/>
<dbReference type="OrthoDB" id="9764416at2"/>
<dbReference type="Proteomes" id="UP000000642">
    <property type="component" value="Chromosome"/>
</dbReference>
<dbReference type="GO" id="GO:0005886">
    <property type="term" value="C:plasma membrane"/>
    <property type="evidence" value="ECO:0007669"/>
    <property type="project" value="UniProtKB-SubCell"/>
</dbReference>
<dbReference type="GO" id="GO:0015123">
    <property type="term" value="F:acetate transmembrane transporter activity"/>
    <property type="evidence" value="ECO:0007669"/>
    <property type="project" value="UniProtKB-UniRule"/>
</dbReference>
<dbReference type="GO" id="GO:0043879">
    <property type="term" value="F:glycolate transmembrane transporter activity"/>
    <property type="evidence" value="ECO:0007669"/>
    <property type="project" value="InterPro"/>
</dbReference>
<dbReference type="GO" id="GO:0015293">
    <property type="term" value="F:symporter activity"/>
    <property type="evidence" value="ECO:0007669"/>
    <property type="project" value="UniProtKB-KW"/>
</dbReference>
<dbReference type="GO" id="GO:0006847">
    <property type="term" value="P:plasma membrane acetate transport"/>
    <property type="evidence" value="ECO:0007669"/>
    <property type="project" value="TreeGrafter"/>
</dbReference>
<dbReference type="GO" id="GO:0006814">
    <property type="term" value="P:sodium ion transport"/>
    <property type="evidence" value="ECO:0007669"/>
    <property type="project" value="UniProtKB-KW"/>
</dbReference>
<dbReference type="CDD" id="cd11480">
    <property type="entry name" value="SLC5sbd_u4"/>
    <property type="match status" value="1"/>
</dbReference>
<dbReference type="FunFam" id="1.20.1730.10:FF:000001">
    <property type="entry name" value="Cation/acetate symporter ActP"/>
    <property type="match status" value="1"/>
</dbReference>
<dbReference type="Gene3D" id="1.20.1730.10">
    <property type="entry name" value="Sodium/glucose cotransporter"/>
    <property type="match status" value="1"/>
</dbReference>
<dbReference type="HAMAP" id="MF_01426">
    <property type="entry name" value="Acet_symport_ActP"/>
    <property type="match status" value="1"/>
</dbReference>
<dbReference type="InterPro" id="IPR014083">
    <property type="entry name" value="Cation/Ac_symporter_ActP"/>
</dbReference>
<dbReference type="InterPro" id="IPR038377">
    <property type="entry name" value="Na/Glc_symporter_sf"/>
</dbReference>
<dbReference type="InterPro" id="IPR001734">
    <property type="entry name" value="Na/solute_symporter"/>
</dbReference>
<dbReference type="InterPro" id="IPR018212">
    <property type="entry name" value="Na/solute_symporter_CS"/>
</dbReference>
<dbReference type="InterPro" id="IPR050277">
    <property type="entry name" value="Sodium:Solute_Symporter"/>
</dbReference>
<dbReference type="NCBIfam" id="NF006903">
    <property type="entry name" value="PRK09395.1"/>
    <property type="match status" value="1"/>
</dbReference>
<dbReference type="NCBIfam" id="NF009135">
    <property type="entry name" value="PRK12488.1"/>
    <property type="match status" value="1"/>
</dbReference>
<dbReference type="NCBIfam" id="TIGR00813">
    <property type="entry name" value="sss"/>
    <property type="match status" value="1"/>
</dbReference>
<dbReference type="NCBIfam" id="TIGR02711">
    <property type="entry name" value="symport_actP"/>
    <property type="match status" value="1"/>
</dbReference>
<dbReference type="PANTHER" id="PTHR48086:SF6">
    <property type="entry name" value="CATION_ACETATE SYMPORTER ACTP"/>
    <property type="match status" value="1"/>
</dbReference>
<dbReference type="PANTHER" id="PTHR48086">
    <property type="entry name" value="SODIUM/PROLINE SYMPORTER-RELATED"/>
    <property type="match status" value="1"/>
</dbReference>
<dbReference type="Pfam" id="PF00474">
    <property type="entry name" value="SSF"/>
    <property type="match status" value="1"/>
</dbReference>
<dbReference type="PROSITE" id="PS00456">
    <property type="entry name" value="NA_SOLUT_SYMP_1"/>
    <property type="match status" value="1"/>
</dbReference>
<dbReference type="PROSITE" id="PS00457">
    <property type="entry name" value="NA_SOLUT_SYMP_2"/>
    <property type="match status" value="1"/>
</dbReference>
<dbReference type="PROSITE" id="PS50283">
    <property type="entry name" value="NA_SOLUT_SYMP_3"/>
    <property type="match status" value="1"/>
</dbReference>
<organism>
    <name type="scientific">Yersinia enterocolitica serotype O:8 / biotype 1B (strain NCTC 13174 / 8081)</name>
    <dbReference type="NCBI Taxonomy" id="393305"/>
    <lineage>
        <taxon>Bacteria</taxon>
        <taxon>Pseudomonadati</taxon>
        <taxon>Pseudomonadota</taxon>
        <taxon>Gammaproteobacteria</taxon>
        <taxon>Enterobacterales</taxon>
        <taxon>Yersiniaceae</taxon>
        <taxon>Yersinia</taxon>
    </lineage>
</organism>
<gene>
    <name evidence="1" type="primary">actP</name>
    <name type="ordered locus">YE0307</name>
</gene>
<protein>
    <recommendedName>
        <fullName evidence="1">Cation/acetate symporter ActP</fullName>
    </recommendedName>
    <alternativeName>
        <fullName evidence="1">Acetate permease</fullName>
    </alternativeName>
    <alternativeName>
        <fullName evidence="1">Acetate transporter ActP</fullName>
    </alternativeName>
</protein>
<evidence type="ECO:0000255" key="1">
    <source>
        <dbReference type="HAMAP-Rule" id="MF_01426"/>
    </source>
</evidence>
<keyword id="KW-0997">Cell inner membrane</keyword>
<keyword id="KW-1003">Cell membrane</keyword>
<keyword id="KW-0406">Ion transport</keyword>
<keyword id="KW-0472">Membrane</keyword>
<keyword id="KW-0915">Sodium</keyword>
<keyword id="KW-0739">Sodium transport</keyword>
<keyword id="KW-0769">Symport</keyword>
<keyword id="KW-0812">Transmembrane</keyword>
<keyword id="KW-1133">Transmembrane helix</keyword>
<keyword id="KW-0813">Transport</keyword>
<proteinExistence type="inferred from homology"/>
<reference key="1">
    <citation type="journal article" date="2006" name="PLoS Genet.">
        <title>The complete genome sequence and comparative genome analysis of the high pathogenicity Yersinia enterocolitica strain 8081.</title>
        <authorList>
            <person name="Thomson N.R."/>
            <person name="Howard S."/>
            <person name="Wren B.W."/>
            <person name="Holden M.T.G."/>
            <person name="Crossman L."/>
            <person name="Challis G.L."/>
            <person name="Churcher C."/>
            <person name="Mungall K."/>
            <person name="Brooks K."/>
            <person name="Chillingworth T."/>
            <person name="Feltwell T."/>
            <person name="Abdellah Z."/>
            <person name="Hauser H."/>
            <person name="Jagels K."/>
            <person name="Maddison M."/>
            <person name="Moule S."/>
            <person name="Sanders M."/>
            <person name="Whitehead S."/>
            <person name="Quail M.A."/>
            <person name="Dougan G."/>
            <person name="Parkhill J."/>
            <person name="Prentice M.B."/>
        </authorList>
    </citation>
    <scope>NUCLEOTIDE SEQUENCE [LARGE SCALE GENOMIC DNA]</scope>
    <source>
        <strain>NCTC 13174 / 8081</strain>
    </source>
</reference>
<accession>A1JIK1</accession>